<accession>Q96Q42</accession>
<accession>Q53TT1</accession>
<accession>Q53TV2</accession>
<accession>Q8N1E0</accession>
<accession>Q96PC4</accession>
<accession>Q96Q41</accession>
<accession>Q9H973</accession>
<accession>Q9HCK9</accession>
<evidence type="ECO:0000250" key="1"/>
<evidence type="ECO:0000250" key="2">
    <source>
        <dbReference type="UniProtKB" id="P0C5Y8"/>
    </source>
</evidence>
<evidence type="ECO:0000255" key="3">
    <source>
        <dbReference type="PROSITE-ProRule" id="PRU00062"/>
    </source>
</evidence>
<evidence type="ECO:0000255" key="4">
    <source>
        <dbReference type="PROSITE-ProRule" id="PRU00550"/>
    </source>
</evidence>
<evidence type="ECO:0000256" key="5">
    <source>
        <dbReference type="SAM" id="MobiDB-lite"/>
    </source>
</evidence>
<evidence type="ECO:0000269" key="6">
    <source>
    </source>
</evidence>
<evidence type="ECO:0000269" key="7">
    <source>
    </source>
</evidence>
<evidence type="ECO:0000269" key="8">
    <source>
    </source>
</evidence>
<evidence type="ECO:0000269" key="9">
    <source>
    </source>
</evidence>
<evidence type="ECO:0000269" key="10">
    <source>
    </source>
</evidence>
<evidence type="ECO:0000269" key="11">
    <source>
    </source>
</evidence>
<evidence type="ECO:0000303" key="12">
    <source>
    </source>
</evidence>
<evidence type="ECO:0000303" key="13">
    <source>
    </source>
</evidence>
<evidence type="ECO:0000303" key="14">
    <source>
    </source>
</evidence>
<evidence type="ECO:0000305" key="15"/>
<evidence type="ECO:0000312" key="16">
    <source>
        <dbReference type="EMBL" id="BAB69014.1"/>
    </source>
</evidence>
<evidence type="ECO:0007744" key="17">
    <source>
    </source>
</evidence>
<evidence type="ECO:0007744" key="18">
    <source>
    </source>
</evidence>
<evidence type="ECO:0007744" key="19">
    <source>
    </source>
</evidence>
<evidence type="ECO:0007744" key="20">
    <source>
    </source>
</evidence>
<evidence type="ECO:0007744" key="21">
    <source>
    </source>
</evidence>
<evidence type="ECO:0007744" key="22">
    <source>
    </source>
</evidence>
<organism evidence="16">
    <name type="scientific">Homo sapiens</name>
    <name type="common">Human</name>
    <dbReference type="NCBI Taxonomy" id="9606"/>
    <lineage>
        <taxon>Eukaryota</taxon>
        <taxon>Metazoa</taxon>
        <taxon>Chordata</taxon>
        <taxon>Craniata</taxon>
        <taxon>Vertebrata</taxon>
        <taxon>Euteleostomi</taxon>
        <taxon>Mammalia</taxon>
        <taxon>Eutheria</taxon>
        <taxon>Euarchontoglires</taxon>
        <taxon>Primates</taxon>
        <taxon>Haplorrhini</taxon>
        <taxon>Catarrhini</taxon>
        <taxon>Hominidae</taxon>
        <taxon>Homo</taxon>
    </lineage>
</organism>
<gene>
    <name type="primary">ALS2</name>
    <name type="synonym">ALS2CR6</name>
    <name type="synonym">KIAA1563</name>
</gene>
<reference evidence="15" key="1">
    <citation type="journal article" date="2001" name="Nat. Genet.">
        <title>The gene encoding alsin, a protein with three guanine-nucleotide exchange factor domains, is mutated in a form of recessive amyotrophic lateral sclerosis.</title>
        <authorList>
            <person name="Yang Y."/>
            <person name="Hentati A."/>
            <person name="Deng H.-X."/>
            <person name="Dabbagh O."/>
            <person name="Sasaki T."/>
            <person name="Hirano M."/>
            <person name="Hung W.-Y."/>
            <person name="Ouahchi K."/>
            <person name="Yan J."/>
            <person name="Azim A.C."/>
            <person name="Cole N."/>
            <person name="Gascon G."/>
            <person name="Yagmour A."/>
            <person name="Ben-Hamida M."/>
            <person name="Pericak-Vance M."/>
            <person name="Hentati F."/>
            <person name="Siddique T."/>
        </authorList>
    </citation>
    <scope>NUCLEOTIDE SEQUENCE [MRNA] (ISOFORM 1)</scope>
    <scope>VARIANTS ARG-102 AND LYS-1406</scope>
    <scope>INVOLVEMENT IN JPLS</scope>
</reference>
<reference evidence="15" key="2">
    <citation type="journal article" date="2001" name="Nat. Genet.">
        <title>A gene encoding a putative GTPase regulator is mutated in familial amyotrophic lateral sclerosis 2.</title>
        <authorList>
            <person name="Hadano S."/>
            <person name="Hand C.K."/>
            <person name="Osuga H."/>
            <person name="Yanagisawa Y."/>
            <person name="Otomo A."/>
            <person name="Devon R.S."/>
            <person name="Miyamoto N."/>
            <person name="Showguchi-Miyata J."/>
            <person name="Okada Y."/>
            <person name="Singaraja R."/>
            <person name="Figlewicz D.A."/>
            <person name="Kwiatkowski T."/>
            <person name="Hosler B.A."/>
            <person name="Sagie T."/>
            <person name="Skaug J."/>
            <person name="Nasir J."/>
            <person name="Brown R.H. Jr."/>
            <person name="Scherer S.W."/>
            <person name="Rouleau G.A."/>
            <person name="Hayden M.R."/>
            <person name="Ikeda J.-E."/>
        </authorList>
    </citation>
    <scope>NUCLEOTIDE SEQUENCE [MRNA] (ISOFORMS 1 AND 2)</scope>
    <scope>INVOLVEMENT IN ALS2</scope>
    <scope>VARIANT MET-368</scope>
    <source>
        <tissue evidence="8">Brain</tissue>
    </source>
</reference>
<reference evidence="15" key="3">
    <citation type="journal article" date="2000" name="DNA Res.">
        <title>Prediction of the coding sequences of unidentified human genes. XVIII. The complete sequences of 100 new cDNA clones from brain which code for large proteins in vitro.</title>
        <authorList>
            <person name="Nagase T."/>
            <person name="Kikuno R."/>
            <person name="Nakayama M."/>
            <person name="Hirosawa M."/>
            <person name="Ohara O."/>
        </authorList>
    </citation>
    <scope>NUCLEOTIDE SEQUENCE [LARGE SCALE MRNA] (ISOFORM 1)</scope>
    <scope>VARIANT MET-368</scope>
    <source>
        <tissue evidence="6">Brain</tissue>
    </source>
</reference>
<reference evidence="15" key="4">
    <citation type="journal article" date="2002" name="DNA Res.">
        <title>Construction of expression-ready cDNA clones for KIAA genes: manual curation of 330 KIAA cDNA clones.</title>
        <authorList>
            <person name="Nakajima D."/>
            <person name="Okazaki N."/>
            <person name="Yamakawa H."/>
            <person name="Kikuno R."/>
            <person name="Ohara O."/>
            <person name="Nagase T."/>
        </authorList>
    </citation>
    <scope>SEQUENCE REVISION TO 303-304</scope>
</reference>
<reference key="5">
    <citation type="journal article" date="2004" name="Nat. Genet.">
        <title>Complete sequencing and characterization of 21,243 full-length human cDNAs.</title>
        <authorList>
            <person name="Ota T."/>
            <person name="Suzuki Y."/>
            <person name="Nishikawa T."/>
            <person name="Otsuki T."/>
            <person name="Sugiyama T."/>
            <person name="Irie R."/>
            <person name="Wakamatsu A."/>
            <person name="Hayashi K."/>
            <person name="Sato H."/>
            <person name="Nagai K."/>
            <person name="Kimura K."/>
            <person name="Makita H."/>
            <person name="Sekine M."/>
            <person name="Obayashi M."/>
            <person name="Nishi T."/>
            <person name="Shibahara T."/>
            <person name="Tanaka T."/>
            <person name="Ishii S."/>
            <person name="Yamamoto J."/>
            <person name="Saito K."/>
            <person name="Kawai Y."/>
            <person name="Isono Y."/>
            <person name="Nakamura Y."/>
            <person name="Nagahari K."/>
            <person name="Murakami K."/>
            <person name="Yasuda T."/>
            <person name="Iwayanagi T."/>
            <person name="Wagatsuma M."/>
            <person name="Shiratori A."/>
            <person name="Sudo H."/>
            <person name="Hosoiri T."/>
            <person name="Kaku Y."/>
            <person name="Kodaira H."/>
            <person name="Kondo H."/>
            <person name="Sugawara M."/>
            <person name="Takahashi M."/>
            <person name="Kanda K."/>
            <person name="Yokoi T."/>
            <person name="Furuya T."/>
            <person name="Kikkawa E."/>
            <person name="Omura Y."/>
            <person name="Abe K."/>
            <person name="Kamihara K."/>
            <person name="Katsuta N."/>
            <person name="Sato K."/>
            <person name="Tanikawa M."/>
            <person name="Yamazaki M."/>
            <person name="Ninomiya K."/>
            <person name="Ishibashi T."/>
            <person name="Yamashita H."/>
            <person name="Murakawa K."/>
            <person name="Fujimori K."/>
            <person name="Tanai H."/>
            <person name="Kimata M."/>
            <person name="Watanabe M."/>
            <person name="Hiraoka S."/>
            <person name="Chiba Y."/>
            <person name="Ishida S."/>
            <person name="Ono Y."/>
            <person name="Takiguchi S."/>
            <person name="Watanabe S."/>
            <person name="Yosida M."/>
            <person name="Hotuta T."/>
            <person name="Kusano J."/>
            <person name="Kanehori K."/>
            <person name="Takahashi-Fujii A."/>
            <person name="Hara H."/>
            <person name="Tanase T.-O."/>
            <person name="Nomura Y."/>
            <person name="Togiya S."/>
            <person name="Komai F."/>
            <person name="Hara R."/>
            <person name="Takeuchi K."/>
            <person name="Arita M."/>
            <person name="Imose N."/>
            <person name="Musashino K."/>
            <person name="Yuuki H."/>
            <person name="Oshima A."/>
            <person name="Sasaki N."/>
            <person name="Aotsuka S."/>
            <person name="Yoshikawa Y."/>
            <person name="Matsunawa H."/>
            <person name="Ichihara T."/>
            <person name="Shiohata N."/>
            <person name="Sano S."/>
            <person name="Moriya S."/>
            <person name="Momiyama H."/>
            <person name="Satoh N."/>
            <person name="Takami S."/>
            <person name="Terashima Y."/>
            <person name="Suzuki O."/>
            <person name="Nakagawa S."/>
            <person name="Senoh A."/>
            <person name="Mizoguchi H."/>
            <person name="Goto Y."/>
            <person name="Shimizu F."/>
            <person name="Wakebe H."/>
            <person name="Hishigaki H."/>
            <person name="Watanabe T."/>
            <person name="Sugiyama A."/>
            <person name="Takemoto M."/>
            <person name="Kawakami B."/>
            <person name="Yamazaki M."/>
            <person name="Watanabe K."/>
            <person name="Kumagai A."/>
            <person name="Itakura S."/>
            <person name="Fukuzumi Y."/>
            <person name="Fujimori Y."/>
            <person name="Komiyama M."/>
            <person name="Tashiro H."/>
            <person name="Tanigami A."/>
            <person name="Fujiwara T."/>
            <person name="Ono T."/>
            <person name="Yamada K."/>
            <person name="Fujii Y."/>
            <person name="Ozaki K."/>
            <person name="Hirao M."/>
            <person name="Ohmori Y."/>
            <person name="Kawabata A."/>
            <person name="Hikiji T."/>
            <person name="Kobatake N."/>
            <person name="Inagaki H."/>
            <person name="Ikema Y."/>
            <person name="Okamoto S."/>
            <person name="Okitani R."/>
            <person name="Kawakami T."/>
            <person name="Noguchi S."/>
            <person name="Itoh T."/>
            <person name="Shigeta K."/>
            <person name="Senba T."/>
            <person name="Matsumura K."/>
            <person name="Nakajima Y."/>
            <person name="Mizuno T."/>
            <person name="Morinaga M."/>
            <person name="Sasaki M."/>
            <person name="Togashi T."/>
            <person name="Oyama M."/>
            <person name="Hata H."/>
            <person name="Watanabe M."/>
            <person name="Komatsu T."/>
            <person name="Mizushima-Sugano J."/>
            <person name="Satoh T."/>
            <person name="Shirai Y."/>
            <person name="Takahashi Y."/>
            <person name="Nakagawa K."/>
            <person name="Okumura K."/>
            <person name="Nagase T."/>
            <person name="Nomura N."/>
            <person name="Kikuchi H."/>
            <person name="Masuho Y."/>
            <person name="Yamashita R."/>
            <person name="Nakai K."/>
            <person name="Yada T."/>
            <person name="Nakamura Y."/>
            <person name="Ohara O."/>
            <person name="Isogai T."/>
            <person name="Sugano S."/>
        </authorList>
    </citation>
    <scope>NUCLEOTIDE SEQUENCE [LARGE SCALE MRNA] (ISOFORM 2)</scope>
</reference>
<reference key="6">
    <citation type="journal article" date="2005" name="Nature">
        <title>Generation and annotation of the DNA sequences of human chromosomes 2 and 4.</title>
        <authorList>
            <person name="Hillier L.W."/>
            <person name="Graves T.A."/>
            <person name="Fulton R.S."/>
            <person name="Fulton L.A."/>
            <person name="Pepin K.H."/>
            <person name="Minx P."/>
            <person name="Wagner-McPherson C."/>
            <person name="Layman D."/>
            <person name="Wylie K."/>
            <person name="Sekhon M."/>
            <person name="Becker M.C."/>
            <person name="Fewell G.A."/>
            <person name="Delehaunty K.D."/>
            <person name="Miner T.L."/>
            <person name="Nash W.E."/>
            <person name="Kremitzki C."/>
            <person name="Oddy L."/>
            <person name="Du H."/>
            <person name="Sun H."/>
            <person name="Bradshaw-Cordum H."/>
            <person name="Ali J."/>
            <person name="Carter J."/>
            <person name="Cordes M."/>
            <person name="Harris A."/>
            <person name="Isak A."/>
            <person name="van Brunt A."/>
            <person name="Nguyen C."/>
            <person name="Du F."/>
            <person name="Courtney L."/>
            <person name="Kalicki J."/>
            <person name="Ozersky P."/>
            <person name="Abbott S."/>
            <person name="Armstrong J."/>
            <person name="Belter E.A."/>
            <person name="Caruso L."/>
            <person name="Cedroni M."/>
            <person name="Cotton M."/>
            <person name="Davidson T."/>
            <person name="Desai A."/>
            <person name="Elliott G."/>
            <person name="Erb T."/>
            <person name="Fronick C."/>
            <person name="Gaige T."/>
            <person name="Haakenson W."/>
            <person name="Haglund K."/>
            <person name="Holmes A."/>
            <person name="Harkins R."/>
            <person name="Kim K."/>
            <person name="Kruchowski S.S."/>
            <person name="Strong C.M."/>
            <person name="Grewal N."/>
            <person name="Goyea E."/>
            <person name="Hou S."/>
            <person name="Levy A."/>
            <person name="Martinka S."/>
            <person name="Mead K."/>
            <person name="McLellan M.D."/>
            <person name="Meyer R."/>
            <person name="Randall-Maher J."/>
            <person name="Tomlinson C."/>
            <person name="Dauphin-Kohlberg S."/>
            <person name="Kozlowicz-Reilly A."/>
            <person name="Shah N."/>
            <person name="Swearengen-Shahid S."/>
            <person name="Snider J."/>
            <person name="Strong J.T."/>
            <person name="Thompson J."/>
            <person name="Yoakum M."/>
            <person name="Leonard S."/>
            <person name="Pearman C."/>
            <person name="Trani L."/>
            <person name="Radionenko M."/>
            <person name="Waligorski J.E."/>
            <person name="Wang C."/>
            <person name="Rock S.M."/>
            <person name="Tin-Wollam A.-M."/>
            <person name="Maupin R."/>
            <person name="Latreille P."/>
            <person name="Wendl M.C."/>
            <person name="Yang S.-P."/>
            <person name="Pohl C."/>
            <person name="Wallis J.W."/>
            <person name="Spieth J."/>
            <person name="Bieri T.A."/>
            <person name="Berkowicz N."/>
            <person name="Nelson J.O."/>
            <person name="Osborne J."/>
            <person name="Ding L."/>
            <person name="Meyer R."/>
            <person name="Sabo A."/>
            <person name="Shotland Y."/>
            <person name="Sinha P."/>
            <person name="Wohldmann P.E."/>
            <person name="Cook L.L."/>
            <person name="Hickenbotham M.T."/>
            <person name="Eldred J."/>
            <person name="Williams D."/>
            <person name="Jones T.A."/>
            <person name="She X."/>
            <person name="Ciccarelli F.D."/>
            <person name="Izaurralde E."/>
            <person name="Taylor J."/>
            <person name="Schmutz J."/>
            <person name="Myers R.M."/>
            <person name="Cox D.R."/>
            <person name="Huang X."/>
            <person name="McPherson J.D."/>
            <person name="Mardis E.R."/>
            <person name="Clifton S.W."/>
            <person name="Warren W.C."/>
            <person name="Chinwalla A.T."/>
            <person name="Eddy S.R."/>
            <person name="Marra M.A."/>
            <person name="Ovcharenko I."/>
            <person name="Furey T.S."/>
            <person name="Miller W."/>
            <person name="Eichler E.E."/>
            <person name="Bork P."/>
            <person name="Suyama M."/>
            <person name="Torrents D."/>
            <person name="Waterston R.H."/>
            <person name="Wilson R.K."/>
        </authorList>
    </citation>
    <scope>NUCLEOTIDE SEQUENCE [LARGE SCALE GENOMIC DNA]</scope>
</reference>
<reference evidence="15" key="7">
    <citation type="submission" date="2005-07" db="EMBL/GenBank/DDBJ databases">
        <authorList>
            <person name="Mural R.J."/>
            <person name="Istrail S."/>
            <person name="Sutton G.G."/>
            <person name="Florea L."/>
            <person name="Halpern A.L."/>
            <person name="Mobarry C.M."/>
            <person name="Lippert R."/>
            <person name="Walenz B."/>
            <person name="Shatkay H."/>
            <person name="Dew I."/>
            <person name="Miller J.R."/>
            <person name="Flanigan M.J."/>
            <person name="Edwards N.J."/>
            <person name="Bolanos R."/>
            <person name="Fasulo D."/>
            <person name="Halldorsson B.V."/>
            <person name="Hannenhalli S."/>
            <person name="Turner R."/>
            <person name="Yooseph S."/>
            <person name="Lu F."/>
            <person name="Nusskern D.R."/>
            <person name="Shue B.C."/>
            <person name="Zheng X.H."/>
            <person name="Zhong F."/>
            <person name="Delcher A.L."/>
            <person name="Huson D.H."/>
            <person name="Kravitz S.A."/>
            <person name="Mouchard L."/>
            <person name="Reinert K."/>
            <person name="Remington K.A."/>
            <person name="Clark A.G."/>
            <person name="Waterman M.S."/>
            <person name="Eichler E.E."/>
            <person name="Adams M.D."/>
            <person name="Hunkapiller M.W."/>
            <person name="Myers E.W."/>
            <person name="Venter J.C."/>
        </authorList>
    </citation>
    <scope>NUCLEOTIDE SEQUENCE [LARGE SCALE GENOMIC DNA]</scope>
</reference>
<reference evidence="15" key="8">
    <citation type="journal article" date="2004" name="Genome Res.">
        <title>The status, quality, and expansion of the NIH full-length cDNA project: the Mammalian Gene Collection (MGC).</title>
        <authorList>
            <consortium name="The MGC Project Team"/>
        </authorList>
    </citation>
    <scope>NUCLEOTIDE SEQUENCE [LARGE SCALE MRNA] (ISOFORM 3)</scope>
    <scope>VARIANT MET-368</scope>
    <source>
        <tissue evidence="10">Colon</tissue>
        <tissue evidence="10">Kidney</tissue>
    </source>
</reference>
<reference key="9">
    <citation type="journal article" date="2007" name="Biochem. Biophys. Res. Commun.">
        <title>ALS2CL, a novel ALS2-interactor, modulates ALS2-mediated endosome dynamics.</title>
        <authorList>
            <person name="Suzuki-Utsunomiya K."/>
            <person name="Hadano S."/>
            <person name="Otomo A."/>
            <person name="Kunita R."/>
            <person name="Mizumura H."/>
            <person name="Osuga H."/>
            <person name="Ikeda J.-E."/>
        </authorList>
    </citation>
    <scope>SUBUNIT</scope>
    <scope>INTERACTION WITH ALS2CL</scope>
</reference>
<reference evidence="15" key="10">
    <citation type="journal article" date="2002" name="Am. J. Hum. Genet.">
        <title>Infantile-onset ascending hereditary spastic paralysis is associated with mutations in the alsin gene.</title>
        <authorList>
            <person name="Eymard-Pierre E."/>
            <person name="Lesca G."/>
            <person name="Dollet S."/>
            <person name="Santorelli F.M."/>
            <person name="di Capua M."/>
            <person name="Bertini E."/>
            <person name="Boespflug-Tanguy O."/>
        </authorList>
    </citation>
    <scope>INVOLVEMENT IN IAHSP</scope>
</reference>
<reference key="11">
    <citation type="journal article" date="2008" name="J. Proteome Res.">
        <title>Combining protein-based IMAC, peptide-based IMAC, and MudPIT for efficient phosphoproteomic analysis.</title>
        <authorList>
            <person name="Cantin G.T."/>
            <person name="Yi W."/>
            <person name="Lu B."/>
            <person name="Park S.K."/>
            <person name="Xu T."/>
            <person name="Lee J.-D."/>
            <person name="Yates J.R. III"/>
        </authorList>
    </citation>
    <scope>IDENTIFICATION BY MASS SPECTROMETRY [LARGE SCALE ANALYSIS]</scope>
    <source>
        <tissue>Cervix carcinoma</tissue>
    </source>
</reference>
<reference key="12">
    <citation type="journal article" date="2008" name="Proc. Natl. Acad. Sci. U.S.A.">
        <title>A quantitative atlas of mitotic phosphorylation.</title>
        <authorList>
            <person name="Dephoure N."/>
            <person name="Zhou C."/>
            <person name="Villen J."/>
            <person name="Beausoleil S.A."/>
            <person name="Bakalarski C.E."/>
            <person name="Elledge S.J."/>
            <person name="Gygi S.P."/>
        </authorList>
    </citation>
    <scope>PHOSPHORYLATION [LARGE SCALE ANALYSIS] AT SER-483 AND SER-492</scope>
    <scope>IDENTIFICATION BY MASS SPECTROMETRY [LARGE SCALE ANALYSIS]</scope>
    <source>
        <tissue>Cervix carcinoma</tissue>
    </source>
</reference>
<reference key="13">
    <citation type="journal article" date="2009" name="Anal. Chem.">
        <title>Lys-N and trypsin cover complementary parts of the phosphoproteome in a refined SCX-based approach.</title>
        <authorList>
            <person name="Gauci S."/>
            <person name="Helbig A.O."/>
            <person name="Slijper M."/>
            <person name="Krijgsveld J."/>
            <person name="Heck A.J."/>
            <person name="Mohammed S."/>
        </authorList>
    </citation>
    <scope>IDENTIFICATION BY MASS SPECTROMETRY [LARGE SCALE ANALYSIS]</scope>
</reference>
<reference key="14">
    <citation type="journal article" date="2009" name="Sci. Signal.">
        <title>Quantitative phosphoproteomic analysis of T cell receptor signaling reveals system-wide modulation of protein-protein interactions.</title>
        <authorList>
            <person name="Mayya V."/>
            <person name="Lundgren D.H."/>
            <person name="Hwang S.-I."/>
            <person name="Rezaul K."/>
            <person name="Wu L."/>
            <person name="Eng J.K."/>
            <person name="Rodionov V."/>
            <person name="Han D.K."/>
        </authorList>
    </citation>
    <scope>PHOSPHORYLATION [LARGE SCALE ANALYSIS] AT SER-483 AND SER-492</scope>
    <scope>IDENTIFICATION BY MASS SPECTROMETRY [LARGE SCALE ANALYSIS]</scope>
    <source>
        <tissue>Leukemic T-cell</tissue>
    </source>
</reference>
<reference key="15">
    <citation type="journal article" date="2009" name="Science">
        <title>Lysine acetylation targets protein complexes and co-regulates major cellular functions.</title>
        <authorList>
            <person name="Choudhary C."/>
            <person name="Kumar C."/>
            <person name="Gnad F."/>
            <person name="Nielsen M.L."/>
            <person name="Rehman M."/>
            <person name="Walther T.C."/>
            <person name="Olsen J.V."/>
            <person name="Mann M."/>
        </authorList>
    </citation>
    <scope>ACETYLATION [LARGE SCALE ANALYSIS] AT LYS-533</scope>
    <scope>IDENTIFICATION BY MASS SPECTROMETRY [LARGE SCALE ANALYSIS]</scope>
</reference>
<reference key="16">
    <citation type="journal article" date="2011" name="Sci. Signal.">
        <title>System-wide temporal characterization of the proteome and phosphoproteome of human embryonic stem cell differentiation.</title>
        <authorList>
            <person name="Rigbolt K.T."/>
            <person name="Prokhorova T.A."/>
            <person name="Akimov V."/>
            <person name="Henningsen J."/>
            <person name="Johansen P.T."/>
            <person name="Kratchmarova I."/>
            <person name="Kassem M."/>
            <person name="Mann M."/>
            <person name="Olsen J.V."/>
            <person name="Blagoev B."/>
        </authorList>
    </citation>
    <scope>PHOSPHORYLATION [LARGE SCALE ANALYSIS] AT SER-483 AND SER-492</scope>
    <scope>IDENTIFICATION BY MASS SPECTROMETRY [LARGE SCALE ANALYSIS]</scope>
</reference>
<reference key="17">
    <citation type="journal article" date="2013" name="J. Proteome Res.">
        <title>Toward a comprehensive characterization of a human cancer cell phosphoproteome.</title>
        <authorList>
            <person name="Zhou H."/>
            <person name="Di Palma S."/>
            <person name="Preisinger C."/>
            <person name="Peng M."/>
            <person name="Polat A.N."/>
            <person name="Heck A.J."/>
            <person name="Mohammed S."/>
        </authorList>
    </citation>
    <scope>PHOSPHORYLATION [LARGE SCALE ANALYSIS] AT SER-466; SER-483 AND SER-492</scope>
    <scope>IDENTIFICATION BY MASS SPECTROMETRY [LARGE SCALE ANALYSIS]</scope>
    <source>
        <tissue>Cervix carcinoma</tissue>
        <tissue>Erythroleukemia</tissue>
    </source>
</reference>
<reference key="18">
    <citation type="journal article" date="2014" name="J. Proteomics">
        <title>An enzyme assisted RP-RPLC approach for in-depth analysis of human liver phosphoproteome.</title>
        <authorList>
            <person name="Bian Y."/>
            <person name="Song C."/>
            <person name="Cheng K."/>
            <person name="Dong M."/>
            <person name="Wang F."/>
            <person name="Huang J."/>
            <person name="Sun D."/>
            <person name="Wang L."/>
            <person name="Ye M."/>
            <person name="Zou H."/>
        </authorList>
    </citation>
    <scope>PHOSPHORYLATION [LARGE SCALE ANALYSIS] AT SER-465; SER-466 AND SER-483</scope>
    <scope>IDENTIFICATION BY MASS SPECTROMETRY [LARGE SCALE ANALYSIS]</scope>
    <source>
        <tissue>Liver</tissue>
    </source>
</reference>
<feature type="chain" id="PRO_0000080903" description="Alsin">
    <location>
        <begin position="1"/>
        <end position="1657"/>
    </location>
</feature>
<feature type="repeat" description="RCC1 1" evidence="15">
    <location>
        <begin position="59"/>
        <end position="108"/>
    </location>
</feature>
<feature type="repeat" description="RCC1 2" evidence="15">
    <location>
        <begin position="109"/>
        <end position="167"/>
    </location>
</feature>
<feature type="repeat" description="RCC1 3" evidence="15">
    <location>
        <begin position="169"/>
        <end position="218"/>
    </location>
</feature>
<feature type="repeat" description="RCC1 4" evidence="15">
    <location>
        <begin position="525"/>
        <end position="576"/>
    </location>
</feature>
<feature type="repeat" description="RCC1 5" evidence="15">
    <location>
        <begin position="578"/>
        <end position="627"/>
    </location>
</feature>
<feature type="domain" description="DH" evidence="3">
    <location>
        <begin position="690"/>
        <end position="885"/>
    </location>
</feature>
<feature type="domain" description="PH" evidence="15">
    <location>
        <begin position="901"/>
        <end position="1007"/>
    </location>
</feature>
<feature type="repeat" description="MORN 1">
    <location>
        <begin position="1049"/>
        <end position="1071"/>
    </location>
</feature>
<feature type="repeat" description="MORN 2">
    <location>
        <begin position="1072"/>
        <end position="1094"/>
    </location>
</feature>
<feature type="repeat" description="MORN 3">
    <location>
        <begin position="1100"/>
        <end position="1122"/>
    </location>
</feature>
<feature type="repeat" description="MORN 4">
    <location>
        <begin position="1123"/>
        <end position="1145"/>
    </location>
</feature>
<feature type="repeat" description="MORN 5">
    <location>
        <begin position="1151"/>
        <end position="1173"/>
    </location>
</feature>
<feature type="repeat" description="MORN 6">
    <location>
        <begin position="1175"/>
        <end position="1197"/>
    </location>
</feature>
<feature type="repeat" description="MORN 7">
    <location>
        <begin position="1198"/>
        <end position="1220"/>
    </location>
</feature>
<feature type="repeat" description="MORN 8">
    <location>
        <begin position="1221"/>
        <end position="1244"/>
    </location>
</feature>
<feature type="domain" description="VPS9" evidence="4">
    <location>
        <begin position="1513"/>
        <end position="1657"/>
    </location>
</feature>
<feature type="region of interest" description="Disordered" evidence="5">
    <location>
        <begin position="432"/>
        <end position="480"/>
    </location>
</feature>
<feature type="compositionally biased region" description="Basic and acidic residues" evidence="5">
    <location>
        <begin position="445"/>
        <end position="455"/>
    </location>
</feature>
<feature type="compositionally biased region" description="Polar residues" evidence="5">
    <location>
        <begin position="456"/>
        <end position="467"/>
    </location>
</feature>
<feature type="modified residue" description="Phosphoserine" evidence="22">
    <location>
        <position position="465"/>
    </location>
</feature>
<feature type="modified residue" description="Phosphoserine" evidence="21 22">
    <location>
        <position position="466"/>
    </location>
</feature>
<feature type="modified residue" description="Phosphoserine" evidence="17 19 20 21 22">
    <location>
        <position position="483"/>
    </location>
</feature>
<feature type="modified residue" description="Phosphoserine" evidence="17 19 20 21">
    <location>
        <position position="492"/>
    </location>
</feature>
<feature type="modified residue" description="Phosphothreonine" evidence="2">
    <location>
        <position position="510"/>
    </location>
</feature>
<feature type="modified residue" description="N6-acetyllysine" evidence="18">
    <location>
        <position position="533"/>
    </location>
</feature>
<feature type="modified residue" description="Phosphoserine" evidence="2">
    <location>
        <position position="1335"/>
    </location>
</feature>
<feature type="splice variant" id="VSP_050521" description="In isoform 2." evidence="12 13">
    <original>PLLEEAIPNLHSPPTTSTSALNSLV</original>
    <variation>VPAQFYKIKVCLELNCMGFSLETLK</variation>
    <location>
        <begin position="372"/>
        <end position="396"/>
    </location>
</feature>
<feature type="splice variant" id="VSP_050522" description="In isoform 2." evidence="12 13">
    <location>
        <begin position="397"/>
        <end position="1657"/>
    </location>
</feature>
<feature type="splice variant" id="VSP_050523" description="In isoform 3." evidence="14">
    <original>YCTSITNFLVMGGFQLLAKPAID</original>
    <variation>QVSSPVSCSISAGLFCQGEQLLN</variation>
    <location>
        <begin position="785"/>
        <end position="807"/>
    </location>
</feature>
<feature type="splice variant" id="VSP_050524" description="In isoform 3." evidence="14">
    <location>
        <begin position="808"/>
        <end position="1657"/>
    </location>
</feature>
<feature type="sequence variant" id="VAR_036747" description="In dbSNP:rs3219154.">
    <original>I</original>
    <variation>V</variation>
    <location>
        <position position="94"/>
    </location>
</feature>
<feature type="sequence variant" id="VAR_015655" description="In dbSNP:rs1416065347." evidence="7">
    <original>H</original>
    <variation>R</variation>
    <location>
        <position position="102"/>
    </location>
</feature>
<feature type="sequence variant" id="VAR_036748" description="In dbSNP:rs3219155.">
    <original>E</original>
    <variation>K</variation>
    <location>
        <position position="159"/>
    </location>
</feature>
<feature type="sequence variant" id="VAR_015656" description="In dbSNP:rs3219156." evidence="6 7 8 10">
    <original>V</original>
    <variation>M</variation>
    <location>
        <position position="368"/>
    </location>
</feature>
<feature type="sequence variant" id="VAR_036749" description="In dbSNP:rs10206276.">
    <original>S</original>
    <variation>F</variation>
    <location>
        <position position="1255"/>
    </location>
</feature>
<feature type="sequence variant" id="VAR_015657" description="In dbSNP:rs1559033861." evidence="7">
    <original>R</original>
    <variation>K</variation>
    <location>
        <position position="1406"/>
    </location>
</feature>
<feature type="sequence conflict" description="In Ref. 1; AAL14103 and 5; BAB14362." evidence="15" ref="1 5">
    <original>P</original>
    <variation>L</variation>
    <location>
        <position position="69"/>
    </location>
</feature>
<feature type="sequence conflict" description="In Ref. 8; AAH29174." evidence="15" ref="8">
    <original>W</original>
    <variation>C</variation>
    <location>
        <position position="115"/>
    </location>
</feature>
<name>ALS2_HUMAN</name>
<sequence length="1657" mass="183634">MDSKKRSSTEAEGSKERGLVHIWQAGSFPITPERLPGWGGKTVLQAALGVKHGVLLTEDGEVYSFGTLPWRSGPVEICPSSPILENALVGQYVITVATGSFHSGAVTDNGVAYMWGENSAGQCAVANQQYVPEPNPVSIADSEASPLLAVRILQLACGEEHTLALSISREIWAWGTGCQLGLITTAFPVTKPQKVEHLAGRVVLQVACGAFHSLALVQCLPSQDLKPVPERCNQCSQLLITMTDKEDHVIISDSHCCPLGVTLTESQAENHASTALSPSTETLDRQEEVFENTLVANDQSVATELNAVSAQITSSDAMSSQQNVMGTTEISSARNIPSYPDTQAVNEYLRKLSDHSVREDSEHGEKPVPSQPLLEEAIPNLHSPPTTSTSALNSLVVSCASAVGVRVAATYEAGALSLKKVMNFYSTTPCETGAQAGSSAIGPEGLKDSREEQVKQESMQGKKSSSLVDIREEETEGGSRRLSLPGLLSQVSPRLLRKAARVKTRTVVLTPTYSGEADALLPSLRTEVWTWGKGKEGQLGHGDVLPRLQPLCVKCLDGKEVIHLEAGGYHSLALTAKSQVYSWGSNTFGQLGHSDFPTTVPRLAKISSENGVWSIAAGRDYSLFLVDTEDFQPGLYYSGRQDPTEGDNLPENHSGSKTPVLLSCSKLGYISRVTAGKDSYLALVDKNIMGYIASLHELATTERRFYSKLSDIKSQILRPLLSLENLGTTTTVQLLQEVASRFSKLCYLIGQHGASLSSFLHGVKEARSLVILKHSSLFLDSYTEYCTSITNFLVMGGFQLLAKPAIDFLNKNQELLQDLSEVNDENTQLMEILNTLFFLPIRRLHNYAKVLLKLATCFEVASPEYQKLQDSSSCYECLALHLGRKRKEAEYTLGFWKTFPGKMTDSLRKPERRLLCESSNRALSLQHAGRFSVNWFILFNDALVHAQFSTHHVFPLATLWAEPLSEEAGGVNGLKITTPEEQFTLISSTPQEKTKWLRAISQAVDQALRGMSDLPPYGSGSSVQRQEPPISRSAKYTFYKDPRLKDATYDGRWLSGKPHGRGVLKWPDGKMYSGMFRNGLEDGYGEYRIPNKAMNKEDHYVGHWKEGKMCGQGVYSYASGEVFEGCFQDNMRHGHGLLRSGKLTSSSPSMFIGQWVMDKKAGYGVFDDITRGEKYMGMWQDDVCQGNGVVVTQFGLYYEGNFHLNKMMGNGVLLSEDDTIYEGEFSDDWTLSGKGTLTMPNGDYIEGYFSGEWGSGIKITGTYFKPSLYESDKDRPKVFRKLGNLAVPADEKWKAVFDECWRQLGCEGPGQGEVWKAWDNIAVALTTSRRQHRDSPEILSRSQTQTLESLEFIPQHVGAFSVEKYDDIRKYLIKACDTPLHPLGRLVETLVAVYRMTYVGVGANRRLLQEAVKEIKSYLKRIFQLVRFLFPELPEEGSTIPLSAPLPTERKSFCTGKSDSRSESPEPGYVVTSSGLLLPVLLPRLYPPLFMLYALDNDREEDIYWECVLRLNKQPDIALLGFLGVQRKFWPATLSILGESKKVLPTTKDACFASAVECLQQISTTFTPSDKLKVIQQTFEEISQSVLASLHEDFLWSMDDLFPVFLYVVLRARIRNLGSEVHLIEDLMDPYLQHGEQGIMFTTLKACYYQIQREKLN</sequence>
<keyword id="KW-0007">Acetylation</keyword>
<keyword id="KW-0025">Alternative splicing</keyword>
<keyword id="KW-0036">Amyotrophic lateral sclerosis</keyword>
<keyword id="KW-0344">Guanine-nucleotide releasing factor</keyword>
<keyword id="KW-0523">Neurodegeneration</keyword>
<keyword id="KW-0597">Phosphoprotein</keyword>
<keyword id="KW-1267">Proteomics identification</keyword>
<keyword id="KW-1185">Reference proteome</keyword>
<keyword id="KW-0677">Repeat</keyword>
<protein>
    <recommendedName>
        <fullName>Alsin</fullName>
    </recommendedName>
    <alternativeName>
        <fullName>Amyotrophic lateral sclerosis 2 chromosomal region candidate gene 6 protein</fullName>
    </alternativeName>
    <alternativeName>
        <fullName>Amyotrophic lateral sclerosis 2 protein</fullName>
    </alternativeName>
</protein>
<dbReference type="EMBL" id="AF391100">
    <property type="protein sequence ID" value="AAL14103.1"/>
    <property type="molecule type" value="mRNA"/>
</dbReference>
<dbReference type="EMBL" id="AB053305">
    <property type="protein sequence ID" value="BAB69014.1"/>
    <property type="molecule type" value="mRNA"/>
</dbReference>
<dbReference type="EMBL" id="AB053306">
    <property type="protein sequence ID" value="BAB69015.1"/>
    <property type="molecule type" value="mRNA"/>
</dbReference>
<dbReference type="EMBL" id="AB046783">
    <property type="protein sequence ID" value="BAB13389.2"/>
    <property type="status" value="ALT_INIT"/>
    <property type="molecule type" value="mRNA"/>
</dbReference>
<dbReference type="EMBL" id="AK023024">
    <property type="protein sequence ID" value="BAB14362.1"/>
    <property type="molecule type" value="mRNA"/>
</dbReference>
<dbReference type="EMBL" id="AC007242">
    <property type="protein sequence ID" value="AAX93181.1"/>
    <property type="molecule type" value="Genomic_DNA"/>
</dbReference>
<dbReference type="EMBL" id="AC007279">
    <property type="protein sequence ID" value="AAY15058.1"/>
    <property type="molecule type" value="Genomic_DNA"/>
</dbReference>
<dbReference type="EMBL" id="CH471063">
    <property type="protein sequence ID" value="EAW70291.1"/>
    <property type="molecule type" value="Genomic_DNA"/>
</dbReference>
<dbReference type="EMBL" id="BC029174">
    <property type="protein sequence ID" value="AAH29174.1"/>
    <property type="molecule type" value="mRNA"/>
</dbReference>
<dbReference type="CCDS" id="CCDS42800.1">
    <molecule id="Q96Q42-1"/>
</dbReference>
<dbReference type="CCDS" id="CCDS46492.1">
    <molecule id="Q96Q42-2"/>
</dbReference>
<dbReference type="RefSeq" id="NP_001129217.1">
    <molecule id="Q96Q42-2"/>
    <property type="nucleotide sequence ID" value="NM_001135745.2"/>
</dbReference>
<dbReference type="RefSeq" id="NP_065970.2">
    <molecule id="Q96Q42-1"/>
    <property type="nucleotide sequence ID" value="NM_020919.3"/>
</dbReference>
<dbReference type="RefSeq" id="XP_006712717.1">
    <molecule id="Q96Q42-1"/>
    <property type="nucleotide sequence ID" value="XM_006712654.4"/>
</dbReference>
<dbReference type="BioGRID" id="121708">
    <property type="interactions" value="26"/>
</dbReference>
<dbReference type="FunCoup" id="Q96Q42">
    <property type="interactions" value="1385"/>
</dbReference>
<dbReference type="IntAct" id="Q96Q42">
    <property type="interactions" value="26"/>
</dbReference>
<dbReference type="MINT" id="Q96Q42"/>
<dbReference type="STRING" id="9606.ENSP00000264276"/>
<dbReference type="GlyGen" id="Q96Q42">
    <property type="glycosylation" value="1 site, 1 O-linked glycan (1 site)"/>
</dbReference>
<dbReference type="iPTMnet" id="Q96Q42"/>
<dbReference type="PhosphoSitePlus" id="Q96Q42"/>
<dbReference type="BioMuta" id="ALS2"/>
<dbReference type="DMDM" id="296434394"/>
<dbReference type="jPOST" id="Q96Q42"/>
<dbReference type="MassIVE" id="Q96Q42"/>
<dbReference type="PaxDb" id="9606-ENSP00000264276"/>
<dbReference type="PeptideAtlas" id="Q96Q42"/>
<dbReference type="ProteomicsDB" id="77823">
    <molecule id="Q96Q42-1"/>
</dbReference>
<dbReference type="ProteomicsDB" id="77824">
    <molecule id="Q96Q42-2"/>
</dbReference>
<dbReference type="ProteomicsDB" id="77825">
    <molecule id="Q96Q42-3"/>
</dbReference>
<dbReference type="Pumba" id="Q96Q42"/>
<dbReference type="Antibodypedia" id="34146">
    <property type="antibodies" value="257 antibodies from 35 providers"/>
</dbReference>
<dbReference type="DNASU" id="57679"/>
<dbReference type="Ensembl" id="ENST00000264276.11">
    <molecule id="Q96Q42-1"/>
    <property type="protein sequence ID" value="ENSP00000264276.6"/>
    <property type="gene ID" value="ENSG00000003393.16"/>
</dbReference>
<dbReference type="Ensembl" id="ENST00000409632.7">
    <molecule id="Q96Q42-2"/>
    <property type="protein sequence ID" value="ENSP00000386384.3"/>
    <property type="gene ID" value="ENSG00000003393.16"/>
</dbReference>
<dbReference type="Ensembl" id="ENST00000467448.5">
    <molecule id="Q96Q42-2"/>
    <property type="protein sequence ID" value="ENSP00000429223.1"/>
    <property type="gene ID" value="ENSG00000003393.16"/>
</dbReference>
<dbReference type="Ensembl" id="ENST00000679435.1">
    <molecule id="Q96Q42-1"/>
    <property type="protein sequence ID" value="ENSP00000505218.1"/>
    <property type="gene ID" value="ENSG00000003393.16"/>
</dbReference>
<dbReference type="Ensembl" id="ENST00000679503.1">
    <molecule id="Q96Q42-2"/>
    <property type="protein sequence ID" value="ENSP00000505968.1"/>
    <property type="gene ID" value="ENSG00000003393.16"/>
</dbReference>
<dbReference type="Ensembl" id="ENST00000679516.1">
    <molecule id="Q96Q42-1"/>
    <property type="protein sequence ID" value="ENSP00000505187.1"/>
    <property type="gene ID" value="ENSG00000003393.16"/>
</dbReference>
<dbReference type="Ensembl" id="ENST00000680163.1">
    <molecule id="Q96Q42-1"/>
    <property type="protein sequence ID" value="ENSP00000505092.1"/>
    <property type="gene ID" value="ENSG00000003393.16"/>
</dbReference>
<dbReference type="Ensembl" id="ENST00000680188.1">
    <molecule id="Q96Q42-2"/>
    <property type="protein sequence ID" value="ENSP00000505665.1"/>
    <property type="gene ID" value="ENSG00000003393.16"/>
</dbReference>
<dbReference type="Ensembl" id="ENST00000680861.1">
    <molecule id="Q96Q42-1"/>
    <property type="protein sequence ID" value="ENSP00000505043.1"/>
    <property type="gene ID" value="ENSG00000003393.16"/>
</dbReference>
<dbReference type="GeneID" id="57679"/>
<dbReference type="KEGG" id="hsa:57679"/>
<dbReference type="MANE-Select" id="ENST00000264276.11">
    <property type="protein sequence ID" value="ENSP00000264276.6"/>
    <property type="RefSeq nucleotide sequence ID" value="NM_020919.4"/>
    <property type="RefSeq protein sequence ID" value="NP_065970.2"/>
</dbReference>
<dbReference type="UCSC" id="uc002uyo.4">
    <molecule id="Q96Q42-1"/>
    <property type="organism name" value="human"/>
</dbReference>
<dbReference type="AGR" id="HGNC:443"/>
<dbReference type="CTD" id="57679"/>
<dbReference type="DisGeNET" id="57679"/>
<dbReference type="GeneCards" id="ALS2"/>
<dbReference type="GeneReviews" id="ALS2"/>
<dbReference type="HGNC" id="HGNC:443">
    <property type="gene designation" value="ALS2"/>
</dbReference>
<dbReference type="HPA" id="ENSG00000003393">
    <property type="expression patterns" value="Tissue enriched (brain)"/>
</dbReference>
<dbReference type="MalaCards" id="ALS2"/>
<dbReference type="MIM" id="205100">
    <property type="type" value="phenotype"/>
</dbReference>
<dbReference type="MIM" id="606352">
    <property type="type" value="gene"/>
</dbReference>
<dbReference type="MIM" id="606353">
    <property type="type" value="phenotype"/>
</dbReference>
<dbReference type="MIM" id="607225">
    <property type="type" value="phenotype"/>
</dbReference>
<dbReference type="neXtProt" id="NX_Q96Q42"/>
<dbReference type="OpenTargets" id="ENSG00000003393"/>
<dbReference type="Orphanet" id="293168">
    <property type="disease" value="Infantile-onset ascending hereditary spastic paralysis"/>
</dbReference>
<dbReference type="Orphanet" id="300605">
    <property type="disease" value="Juvenile amyotrophic lateral sclerosis"/>
</dbReference>
<dbReference type="Orphanet" id="247604">
    <property type="disease" value="Juvenile primary lateral sclerosis"/>
</dbReference>
<dbReference type="PharmGKB" id="PA24732"/>
<dbReference type="VEuPathDB" id="HostDB:ENSG00000003393"/>
<dbReference type="eggNOG" id="KOG0231">
    <property type="taxonomic scope" value="Eukaryota"/>
</dbReference>
<dbReference type="eggNOG" id="KOG1426">
    <property type="taxonomic scope" value="Eukaryota"/>
</dbReference>
<dbReference type="GeneTree" id="ENSGT00940000155861"/>
<dbReference type="HOGENOM" id="CLU_003333_0_0_1"/>
<dbReference type="InParanoid" id="Q96Q42"/>
<dbReference type="OMA" id="CYLTGQH"/>
<dbReference type="OrthoDB" id="48314at2759"/>
<dbReference type="PAN-GO" id="Q96Q42">
    <property type="GO annotations" value="9 GO annotations based on evolutionary models"/>
</dbReference>
<dbReference type="PhylomeDB" id="Q96Q42"/>
<dbReference type="TreeFam" id="TF331793"/>
<dbReference type="PathwayCommons" id="Q96Q42"/>
<dbReference type="Reactome" id="R-HSA-8876198">
    <property type="pathway name" value="RAB GEFs exchange GTP for GDP on RABs"/>
</dbReference>
<dbReference type="Reactome" id="R-HSA-9013149">
    <property type="pathway name" value="RAC1 GTPase cycle"/>
</dbReference>
<dbReference type="SignaLink" id="Q96Q42"/>
<dbReference type="SIGNOR" id="Q96Q42"/>
<dbReference type="BioGRID-ORCS" id="57679">
    <property type="hits" value="11 hits in 1152 CRISPR screens"/>
</dbReference>
<dbReference type="CD-CODE" id="8C2F96ED">
    <property type="entry name" value="Centrosome"/>
</dbReference>
<dbReference type="ChiTaRS" id="ALS2">
    <property type="organism name" value="human"/>
</dbReference>
<dbReference type="GeneWiki" id="ALS2"/>
<dbReference type="GenomeRNAi" id="57679"/>
<dbReference type="Pharos" id="Q96Q42">
    <property type="development level" value="Tbio"/>
</dbReference>
<dbReference type="PRO" id="PR:Q96Q42"/>
<dbReference type="Proteomes" id="UP000005640">
    <property type="component" value="Chromosome 2"/>
</dbReference>
<dbReference type="RNAct" id="Q96Q42">
    <property type="molecule type" value="protein"/>
</dbReference>
<dbReference type="Bgee" id="ENSG00000003393">
    <property type="expression patterns" value="Expressed in cerebellum and 181 other cell types or tissues"/>
</dbReference>
<dbReference type="ExpressionAtlas" id="Q96Q42">
    <property type="expression patterns" value="baseline and differential"/>
</dbReference>
<dbReference type="GO" id="GO:0005813">
    <property type="term" value="C:centrosome"/>
    <property type="evidence" value="ECO:0000314"/>
    <property type="project" value="MGI"/>
</dbReference>
<dbReference type="GO" id="GO:0005737">
    <property type="term" value="C:cytoplasm"/>
    <property type="evidence" value="ECO:0000318"/>
    <property type="project" value="GO_Central"/>
</dbReference>
<dbReference type="GO" id="GO:0005829">
    <property type="term" value="C:cytosol"/>
    <property type="evidence" value="ECO:0000314"/>
    <property type="project" value="UniProtKB"/>
</dbReference>
<dbReference type="GO" id="GO:0030425">
    <property type="term" value="C:dendrite"/>
    <property type="evidence" value="ECO:0000314"/>
    <property type="project" value="UniProtKB"/>
</dbReference>
<dbReference type="GO" id="GO:0043197">
    <property type="term" value="C:dendritic spine"/>
    <property type="evidence" value="ECO:0007669"/>
    <property type="project" value="Ensembl"/>
</dbReference>
<dbReference type="GO" id="GO:0005769">
    <property type="term" value="C:early endosome"/>
    <property type="evidence" value="ECO:0000314"/>
    <property type="project" value="UniProtKB"/>
</dbReference>
<dbReference type="GO" id="GO:0098978">
    <property type="term" value="C:glutamatergic synapse"/>
    <property type="evidence" value="ECO:0007669"/>
    <property type="project" value="Ensembl"/>
</dbReference>
<dbReference type="GO" id="GO:0030426">
    <property type="term" value="C:growth cone"/>
    <property type="evidence" value="ECO:0000250"/>
    <property type="project" value="UniProtKB"/>
</dbReference>
<dbReference type="GO" id="GO:0043231">
    <property type="term" value="C:intracellular membrane-bounded organelle"/>
    <property type="evidence" value="ECO:0000318"/>
    <property type="project" value="GO_Central"/>
</dbReference>
<dbReference type="GO" id="GO:0030027">
    <property type="term" value="C:lamellipodium"/>
    <property type="evidence" value="ECO:0000250"/>
    <property type="project" value="UniProtKB"/>
</dbReference>
<dbReference type="GO" id="GO:0005634">
    <property type="term" value="C:nucleus"/>
    <property type="evidence" value="ECO:0000314"/>
    <property type="project" value="MGI"/>
</dbReference>
<dbReference type="GO" id="GO:0014069">
    <property type="term" value="C:postsynaptic density"/>
    <property type="evidence" value="ECO:0007669"/>
    <property type="project" value="Ensembl"/>
</dbReference>
<dbReference type="GO" id="GO:0032991">
    <property type="term" value="C:protein-containing complex"/>
    <property type="evidence" value="ECO:0000314"/>
    <property type="project" value="UniProtKB"/>
</dbReference>
<dbReference type="GO" id="GO:0001726">
    <property type="term" value="C:ruffle"/>
    <property type="evidence" value="ECO:0000250"/>
    <property type="project" value="UniProtKB"/>
</dbReference>
<dbReference type="GO" id="GO:0031982">
    <property type="term" value="C:vesicle"/>
    <property type="evidence" value="ECO:0000314"/>
    <property type="project" value="UniProtKB"/>
</dbReference>
<dbReference type="GO" id="GO:0005096">
    <property type="term" value="F:GTPase activator activity"/>
    <property type="evidence" value="ECO:0000314"/>
    <property type="project" value="MGI"/>
</dbReference>
<dbReference type="GO" id="GO:0005085">
    <property type="term" value="F:guanyl-nucleotide exchange factor activity"/>
    <property type="evidence" value="ECO:0000314"/>
    <property type="project" value="UniProtKB"/>
</dbReference>
<dbReference type="GO" id="GO:0042802">
    <property type="term" value="F:identical protein binding"/>
    <property type="evidence" value="ECO:0000314"/>
    <property type="project" value="MGI"/>
</dbReference>
<dbReference type="GO" id="GO:0042803">
    <property type="term" value="F:protein homodimerization activity"/>
    <property type="evidence" value="ECO:0000353"/>
    <property type="project" value="UniProtKB"/>
</dbReference>
<dbReference type="GO" id="GO:0043539">
    <property type="term" value="F:protein serine/threonine kinase activator activity"/>
    <property type="evidence" value="ECO:0000314"/>
    <property type="project" value="UniProtKB"/>
</dbReference>
<dbReference type="GO" id="GO:0031267">
    <property type="term" value="F:small GTPase binding"/>
    <property type="evidence" value="ECO:0000314"/>
    <property type="project" value="UniProtKB"/>
</dbReference>
<dbReference type="GO" id="GO:0001662">
    <property type="term" value="P:behavioral fear response"/>
    <property type="evidence" value="ECO:0007669"/>
    <property type="project" value="Ensembl"/>
</dbReference>
<dbReference type="GO" id="GO:0016197">
    <property type="term" value="P:endosomal transport"/>
    <property type="evidence" value="ECO:0000318"/>
    <property type="project" value="GO_Central"/>
</dbReference>
<dbReference type="GO" id="GO:0007032">
    <property type="term" value="P:endosome organization"/>
    <property type="evidence" value="ECO:0000303"/>
    <property type="project" value="UniProtKB"/>
</dbReference>
<dbReference type="GO" id="GO:0007626">
    <property type="term" value="P:locomotory behavior"/>
    <property type="evidence" value="ECO:0007669"/>
    <property type="project" value="Ensembl"/>
</dbReference>
<dbReference type="GO" id="GO:0007041">
    <property type="term" value="P:lysosomal transport"/>
    <property type="evidence" value="ECO:0000314"/>
    <property type="project" value="MGI"/>
</dbReference>
<dbReference type="GO" id="GO:0007528">
    <property type="term" value="P:neuromuscular junction development"/>
    <property type="evidence" value="ECO:0007669"/>
    <property type="project" value="Ensembl"/>
</dbReference>
<dbReference type="GO" id="GO:0048812">
    <property type="term" value="P:neuron projection morphogenesis"/>
    <property type="evidence" value="ECO:0000314"/>
    <property type="project" value="UniProtKB"/>
</dbReference>
<dbReference type="GO" id="GO:0043547">
    <property type="term" value="P:positive regulation of GTPase activity"/>
    <property type="evidence" value="ECO:0000314"/>
    <property type="project" value="UniProtKB"/>
</dbReference>
<dbReference type="GO" id="GO:0045860">
    <property type="term" value="P:positive regulation of protein kinase activity"/>
    <property type="evidence" value="ECO:0000314"/>
    <property type="project" value="UniProtKB"/>
</dbReference>
<dbReference type="GO" id="GO:0035022">
    <property type="term" value="P:positive regulation of Rac protein signal transduction"/>
    <property type="evidence" value="ECO:0000305"/>
    <property type="project" value="UniProtKB"/>
</dbReference>
<dbReference type="GO" id="GO:0051260">
    <property type="term" value="P:protein homooligomerization"/>
    <property type="evidence" value="ECO:0000314"/>
    <property type="project" value="MGI"/>
</dbReference>
<dbReference type="GO" id="GO:0008104">
    <property type="term" value="P:protein localization"/>
    <property type="evidence" value="ECO:0007669"/>
    <property type="project" value="Ensembl"/>
</dbReference>
<dbReference type="GO" id="GO:0001881">
    <property type="term" value="P:receptor recycling"/>
    <property type="evidence" value="ECO:0007669"/>
    <property type="project" value="Ensembl"/>
</dbReference>
<dbReference type="GO" id="GO:0051036">
    <property type="term" value="P:regulation of endosome size"/>
    <property type="evidence" value="ECO:0000270"/>
    <property type="project" value="UniProtKB"/>
</dbReference>
<dbReference type="GO" id="GO:0099072">
    <property type="term" value="P:regulation of postsynaptic membrane neurotransmitter receptor levels"/>
    <property type="evidence" value="ECO:0007669"/>
    <property type="project" value="Ensembl"/>
</dbReference>
<dbReference type="GO" id="GO:0006979">
    <property type="term" value="P:response to oxidative stress"/>
    <property type="evidence" value="ECO:0007669"/>
    <property type="project" value="Ensembl"/>
</dbReference>
<dbReference type="GO" id="GO:0035249">
    <property type="term" value="P:synaptic transmission, glutamatergic"/>
    <property type="evidence" value="ECO:0007669"/>
    <property type="project" value="Ensembl"/>
</dbReference>
<dbReference type="CDD" id="cd13269">
    <property type="entry name" value="PH_alsin"/>
    <property type="match status" value="1"/>
</dbReference>
<dbReference type="FunFam" id="1.20.900.10:FF:000026">
    <property type="entry name" value="Alsin isoform X1"/>
    <property type="match status" value="1"/>
</dbReference>
<dbReference type="FunFam" id="1.20.1050.80:FF:000005">
    <property type="entry name" value="alsin isoform X1"/>
    <property type="match status" value="1"/>
</dbReference>
<dbReference type="FunFam" id="2.130.10.30:FF:000015">
    <property type="entry name" value="alsin isoform X1"/>
    <property type="match status" value="1"/>
</dbReference>
<dbReference type="FunFam" id="2.130.10.30:FF:000019">
    <property type="entry name" value="alsin isoform X1"/>
    <property type="match status" value="1"/>
</dbReference>
<dbReference type="FunFam" id="2.20.110.10:FF:000009">
    <property type="entry name" value="alsin isoform X1"/>
    <property type="match status" value="1"/>
</dbReference>
<dbReference type="FunFam" id="2.30.29.30:FF:000273">
    <property type="entry name" value="alsin isoform X3"/>
    <property type="match status" value="1"/>
</dbReference>
<dbReference type="Gene3D" id="1.20.900.10">
    <property type="entry name" value="Dbl homology (DH) domain"/>
    <property type="match status" value="1"/>
</dbReference>
<dbReference type="Gene3D" id="2.20.110.10">
    <property type="entry name" value="Histone H3 K4-specific methyltransferase SET7/9 N-terminal domain"/>
    <property type="match status" value="3"/>
</dbReference>
<dbReference type="Gene3D" id="2.30.29.30">
    <property type="entry name" value="Pleckstrin-homology domain (PH domain)/Phosphotyrosine-binding domain (PTB)"/>
    <property type="match status" value="1"/>
</dbReference>
<dbReference type="Gene3D" id="2.130.10.30">
    <property type="entry name" value="Regulator of chromosome condensation 1/beta-lactamase-inhibitor protein II"/>
    <property type="match status" value="2"/>
</dbReference>
<dbReference type="Gene3D" id="1.20.1050.80">
    <property type="entry name" value="VPS9 domain"/>
    <property type="match status" value="1"/>
</dbReference>
<dbReference type="InterPro" id="IPR051984">
    <property type="entry name" value="Alsin_GEFs/MotNeuronReg"/>
</dbReference>
<dbReference type="InterPro" id="IPR035899">
    <property type="entry name" value="DBL_dom_sf"/>
</dbReference>
<dbReference type="InterPro" id="IPR000219">
    <property type="entry name" value="DH_dom"/>
</dbReference>
<dbReference type="InterPro" id="IPR003409">
    <property type="entry name" value="MORN"/>
</dbReference>
<dbReference type="InterPro" id="IPR011993">
    <property type="entry name" value="PH-like_dom_sf"/>
</dbReference>
<dbReference type="InterPro" id="IPR009091">
    <property type="entry name" value="RCC1/BLIP-II"/>
</dbReference>
<dbReference type="InterPro" id="IPR000408">
    <property type="entry name" value="Reg_chr_condens"/>
</dbReference>
<dbReference type="InterPro" id="IPR003123">
    <property type="entry name" value="VPS9"/>
</dbReference>
<dbReference type="InterPro" id="IPR037191">
    <property type="entry name" value="VPS9_dom_sf"/>
</dbReference>
<dbReference type="PANTHER" id="PTHR46089:SF3">
    <property type="entry name" value="ALSIN"/>
    <property type="match status" value="1"/>
</dbReference>
<dbReference type="PANTHER" id="PTHR46089">
    <property type="entry name" value="ALSIN HOMOLOG"/>
    <property type="match status" value="1"/>
</dbReference>
<dbReference type="Pfam" id="PF25389">
    <property type="entry name" value="DH_alsin"/>
    <property type="match status" value="1"/>
</dbReference>
<dbReference type="Pfam" id="PF02493">
    <property type="entry name" value="MORN"/>
    <property type="match status" value="8"/>
</dbReference>
<dbReference type="Pfam" id="PF25383">
    <property type="entry name" value="PH_alsin"/>
    <property type="match status" value="1"/>
</dbReference>
<dbReference type="Pfam" id="PF00415">
    <property type="entry name" value="RCC1"/>
    <property type="match status" value="4"/>
</dbReference>
<dbReference type="Pfam" id="PF02204">
    <property type="entry name" value="VPS9"/>
    <property type="match status" value="1"/>
</dbReference>
<dbReference type="PRINTS" id="PR00633">
    <property type="entry name" value="RCCNDNSATION"/>
</dbReference>
<dbReference type="SMART" id="SM00698">
    <property type="entry name" value="MORN"/>
    <property type="match status" value="8"/>
</dbReference>
<dbReference type="SUPFAM" id="SSF48065">
    <property type="entry name" value="DBL homology domain (DH-domain)"/>
    <property type="match status" value="1"/>
</dbReference>
<dbReference type="SUPFAM" id="SSF82185">
    <property type="entry name" value="Histone H3 K4-specific methyltransferase SET7/9 N-terminal domain"/>
    <property type="match status" value="2"/>
</dbReference>
<dbReference type="SUPFAM" id="SSF50729">
    <property type="entry name" value="PH domain-like"/>
    <property type="match status" value="1"/>
</dbReference>
<dbReference type="SUPFAM" id="SSF50985">
    <property type="entry name" value="RCC1/BLIP-II"/>
    <property type="match status" value="2"/>
</dbReference>
<dbReference type="SUPFAM" id="SSF109993">
    <property type="entry name" value="VPS9 domain"/>
    <property type="match status" value="1"/>
</dbReference>
<dbReference type="PROSITE" id="PS50010">
    <property type="entry name" value="DH_2"/>
    <property type="match status" value="1"/>
</dbReference>
<dbReference type="PROSITE" id="PS00626">
    <property type="entry name" value="RCC1_2"/>
    <property type="match status" value="2"/>
</dbReference>
<dbReference type="PROSITE" id="PS50012">
    <property type="entry name" value="RCC1_3"/>
    <property type="match status" value="5"/>
</dbReference>
<dbReference type="PROSITE" id="PS51205">
    <property type="entry name" value="VPS9"/>
    <property type="match status" value="1"/>
</dbReference>
<comment type="function">
    <text evidence="1">May act as a GTPase regulator. Controls survival and growth of spinal motoneurons (By similarity).</text>
</comment>
<comment type="subunit">
    <text evidence="11">Forms a heteromeric complex with ALS2CL. Interacts with ALS2CL.</text>
</comment>
<comment type="interaction">
    <interactant intactId="EBI-1044902">
        <id>Q96Q42</id>
    </interactant>
    <interactant intactId="EBI-373615">
        <id>Q96PY6</id>
        <label>NEK1</label>
    </interactant>
    <organismsDiffer>false</organismsDiffer>
    <experiments>2</experiments>
</comment>
<comment type="interaction">
    <interactant intactId="EBI-1044902">
        <id>Q96Q42</id>
    </interactant>
    <interactant intactId="EBI-399437">
        <id>P20339</id>
        <label>RAB5A</label>
    </interactant>
    <organismsDiffer>false</organismsDiffer>
    <experiments>2</experiments>
</comment>
<comment type="alternative products">
    <event type="alternative splicing"/>
    <isoform>
        <id>Q96Q42-1</id>
        <name evidence="8">1</name>
        <sequence type="displayed"/>
    </isoform>
    <isoform>
        <id>Q96Q42-2</id>
        <name evidence="8">2</name>
        <sequence type="described" ref="VSP_050521 VSP_050522"/>
    </isoform>
    <isoform>
        <id>Q96Q42-3</id>
        <name evidence="15">3</name>
        <sequence type="described" ref="VSP_050523 VSP_050524"/>
    </isoform>
</comment>
<comment type="disease" evidence="8">
    <disease id="DI-00109">
        <name>Amyotrophic lateral sclerosis 2</name>
        <acronym>ALS2</acronym>
        <description>A neurodegenerative disorder affecting upper motor neurons in the brain and lower motor neurons in the brain stem and spinal cord, resulting in fatal paralysis. Sensory abnormalities are absent. The pathologic hallmarks of the disease include pallor of the corticospinal tract due to loss of motor neurons, presence of ubiquitin-positive inclusions within surviving motor neurons, and deposition of pathologic aggregates. The etiology of amyotrophic lateral sclerosis is likely to be multifactorial, involving both genetic and environmental factors. The disease is inherited in 5-10% of the cases.</description>
        <dbReference type="MIM" id="205100"/>
    </disease>
    <text>The disease is caused by variants affecting the gene represented in this entry.</text>
</comment>
<comment type="disease" evidence="7">
    <disease id="DI-00616">
        <name>Juvenile primary lateral sclerosis</name>
        <acronym>JPLS</acronym>
        <description>A neurodegenerative disorder which is closely related to but clinically distinct from amyotrophic lateral sclerosis. It is a progressive paralytic disorder which results from dysfunction of the upper motor neurons while the lower neurons are unaffected.</description>
        <dbReference type="MIM" id="606353"/>
    </disease>
    <text>The disease is caused by variants affecting the gene represented in this entry.</text>
</comment>
<comment type="disease" evidence="9">
    <disease id="DI-01823">
        <name>Infantile-onset ascending spastic paralysis</name>
        <acronym>IAHSP</acronym>
        <description>Characterized by progressive spasticity and weakness of limbs.</description>
        <dbReference type="MIM" id="607225"/>
    </disease>
    <text>The disease is caused by variants affecting the gene represented in this entry.</text>
</comment>
<comment type="sequence caution" evidence="15">
    <conflict type="erroneous initiation">
        <sequence resource="EMBL-CDS" id="BAB13389"/>
    </conflict>
    <text>Extended N-terminus.</text>
</comment>
<comment type="online information" name="Alsod">
    <link uri="https://alsod.ac.uk/"/>
    <text>ALS genetic mutations db</text>
</comment>
<proteinExistence type="evidence at protein level"/>